<accession>Q9LGB4</accession>
<accession>Q5ZEG5</accession>
<name>SPCS3_ORYSJ</name>
<organism>
    <name type="scientific">Oryza sativa subsp. japonica</name>
    <name type="common">Rice</name>
    <dbReference type="NCBI Taxonomy" id="39947"/>
    <lineage>
        <taxon>Eukaryota</taxon>
        <taxon>Viridiplantae</taxon>
        <taxon>Streptophyta</taxon>
        <taxon>Embryophyta</taxon>
        <taxon>Tracheophyta</taxon>
        <taxon>Spermatophyta</taxon>
        <taxon>Magnoliopsida</taxon>
        <taxon>Liliopsida</taxon>
        <taxon>Poales</taxon>
        <taxon>Poaceae</taxon>
        <taxon>BOP clade</taxon>
        <taxon>Oryzoideae</taxon>
        <taxon>Oryzeae</taxon>
        <taxon>Oryzinae</taxon>
        <taxon>Oryza</taxon>
        <taxon>Oryza sativa</taxon>
    </lineage>
</organism>
<comment type="function">
    <text evidence="2 3">Essential component of the signal peptidase complex (SPC) which catalyzes the cleavage of N-terminal signal sequences from nascent proteins as they are translocated into the lumen of the endoplasmic reticulum (By similarity). Essential for the SPC catalytic activity, possibly by stabilizing and positioning the active center of the complex close to the lumenal surface (By similarity).</text>
</comment>
<comment type="subunit">
    <text evidence="2">Component of the signal peptidase complex (SPC) composed of a catalytic subunit SEC11 and three accessory subunits SPCS1, SPCS2 and SPCS3. The complex induces a local thinning of the ER membrane which is used to measure the length of the signal peptide (SP) h-region of protein substrates. This ensures the selectivity of the complex towards h-regions shorter than 18-20 amino acids.</text>
</comment>
<comment type="subcellular location">
    <subcellularLocation>
        <location evidence="1">Endoplasmic reticulum membrane</location>
        <topology evidence="1">Single-pass type II membrane protein</topology>
    </subcellularLocation>
</comment>
<comment type="similarity">
    <text evidence="5">Belongs to the SPCS3 family.</text>
</comment>
<dbReference type="EMBL" id="AP002526">
    <property type="protein sequence ID" value="BAD52472.1"/>
    <property type="molecule type" value="Genomic_DNA"/>
</dbReference>
<dbReference type="EMBL" id="AP014957">
    <property type="status" value="NOT_ANNOTATED_CDS"/>
    <property type="molecule type" value="Genomic_DNA"/>
</dbReference>
<dbReference type="SMR" id="Q9LGB4"/>
<dbReference type="FunCoup" id="Q9LGB4">
    <property type="interactions" value="1436"/>
</dbReference>
<dbReference type="STRING" id="39947.Q9LGB4"/>
<dbReference type="PaxDb" id="39947-Q9LGB4"/>
<dbReference type="InParanoid" id="Q9LGB4"/>
<dbReference type="Proteomes" id="UP000000763">
    <property type="component" value="Chromosome 1"/>
</dbReference>
<dbReference type="Proteomes" id="UP000059680">
    <property type="component" value="Chromosome 1"/>
</dbReference>
<dbReference type="GO" id="GO:0005787">
    <property type="term" value="C:signal peptidase complex"/>
    <property type="evidence" value="ECO:0000318"/>
    <property type="project" value="GO_Central"/>
</dbReference>
<dbReference type="GO" id="GO:0045047">
    <property type="term" value="P:protein targeting to ER"/>
    <property type="evidence" value="ECO:0000318"/>
    <property type="project" value="GO_Central"/>
</dbReference>
<dbReference type="GO" id="GO:0006465">
    <property type="term" value="P:signal peptide processing"/>
    <property type="evidence" value="ECO:0000318"/>
    <property type="project" value="GO_Central"/>
</dbReference>
<dbReference type="InterPro" id="IPR007653">
    <property type="entry name" value="SPC3"/>
</dbReference>
<dbReference type="PANTHER" id="PTHR12804">
    <property type="entry name" value="MICROSOMAL SIGNAL PEPTIDASE 23 KD SUBUNIT SPC22/23"/>
    <property type="match status" value="1"/>
</dbReference>
<dbReference type="PANTHER" id="PTHR12804:SF9">
    <property type="entry name" value="SIGNAL PEPTIDASE COMPLEX SUBUNIT 3"/>
    <property type="match status" value="1"/>
</dbReference>
<dbReference type="Pfam" id="PF04573">
    <property type="entry name" value="SPC22"/>
    <property type="match status" value="1"/>
</dbReference>
<dbReference type="PIRSF" id="PIRSF016089">
    <property type="entry name" value="SPC22"/>
    <property type="match status" value="1"/>
</dbReference>
<feature type="chain" id="PRO_0000218946" description="Signal peptidase complex subunit 3">
    <location>
        <begin position="1"/>
        <end position="147"/>
    </location>
</feature>
<feature type="topological domain" description="Cytoplasmic" evidence="1">
    <location>
        <begin position="1"/>
        <end position="6"/>
    </location>
</feature>
<feature type="transmembrane region" description="Helical; Signal-anchor for type II membrane protein" evidence="4">
    <location>
        <begin position="7"/>
        <end position="29"/>
    </location>
</feature>
<feature type="topological domain" description="Lumenal" evidence="1">
    <location>
        <begin position="30"/>
        <end position="147"/>
    </location>
</feature>
<reference key="1">
    <citation type="journal article" date="2002" name="Nature">
        <title>The genome sequence and structure of rice chromosome 1.</title>
        <authorList>
            <person name="Sasaki T."/>
            <person name="Matsumoto T."/>
            <person name="Yamamoto K."/>
            <person name="Sakata K."/>
            <person name="Baba T."/>
            <person name="Katayose Y."/>
            <person name="Wu J."/>
            <person name="Niimura Y."/>
            <person name="Cheng Z."/>
            <person name="Nagamura Y."/>
            <person name="Antonio B.A."/>
            <person name="Kanamori H."/>
            <person name="Hosokawa S."/>
            <person name="Masukawa M."/>
            <person name="Arikawa K."/>
            <person name="Chiden Y."/>
            <person name="Hayashi M."/>
            <person name="Okamoto M."/>
            <person name="Ando T."/>
            <person name="Aoki H."/>
            <person name="Arita K."/>
            <person name="Hamada M."/>
            <person name="Harada C."/>
            <person name="Hijishita S."/>
            <person name="Honda M."/>
            <person name="Ichikawa Y."/>
            <person name="Idonuma A."/>
            <person name="Iijima M."/>
            <person name="Ikeda M."/>
            <person name="Ikeno M."/>
            <person name="Ito S."/>
            <person name="Ito T."/>
            <person name="Ito Y."/>
            <person name="Ito Y."/>
            <person name="Iwabuchi A."/>
            <person name="Kamiya K."/>
            <person name="Karasawa W."/>
            <person name="Katagiri S."/>
            <person name="Kikuta A."/>
            <person name="Kobayashi N."/>
            <person name="Kono I."/>
            <person name="Machita K."/>
            <person name="Maehara T."/>
            <person name="Mizuno H."/>
            <person name="Mizubayashi T."/>
            <person name="Mukai Y."/>
            <person name="Nagasaki H."/>
            <person name="Nakashima M."/>
            <person name="Nakama Y."/>
            <person name="Nakamichi Y."/>
            <person name="Nakamura M."/>
            <person name="Namiki N."/>
            <person name="Negishi M."/>
            <person name="Ohta I."/>
            <person name="Ono N."/>
            <person name="Saji S."/>
            <person name="Sakai K."/>
            <person name="Shibata M."/>
            <person name="Shimokawa T."/>
            <person name="Shomura A."/>
            <person name="Song J."/>
            <person name="Takazaki Y."/>
            <person name="Terasawa K."/>
            <person name="Tsuji K."/>
            <person name="Waki K."/>
            <person name="Yamagata H."/>
            <person name="Yamane H."/>
            <person name="Yoshiki S."/>
            <person name="Yoshihara R."/>
            <person name="Yukawa K."/>
            <person name="Zhong H."/>
            <person name="Iwama H."/>
            <person name="Endo T."/>
            <person name="Ito H."/>
            <person name="Hahn J.H."/>
            <person name="Kim H.-I."/>
            <person name="Eun M.-Y."/>
            <person name="Yano M."/>
            <person name="Jiang J."/>
            <person name="Gojobori T."/>
        </authorList>
    </citation>
    <scope>NUCLEOTIDE SEQUENCE [LARGE SCALE GENOMIC DNA]</scope>
    <source>
        <strain>cv. Nipponbare</strain>
    </source>
</reference>
<reference key="2">
    <citation type="journal article" date="2005" name="Nature">
        <title>The map-based sequence of the rice genome.</title>
        <authorList>
            <consortium name="International rice genome sequencing project (IRGSP)"/>
        </authorList>
    </citation>
    <scope>NUCLEOTIDE SEQUENCE [LARGE SCALE GENOMIC DNA]</scope>
    <source>
        <strain>cv. Nipponbare</strain>
    </source>
</reference>
<reference key="3">
    <citation type="journal article" date="2013" name="Rice">
        <title>Improvement of the Oryza sativa Nipponbare reference genome using next generation sequence and optical map data.</title>
        <authorList>
            <person name="Kawahara Y."/>
            <person name="de la Bastide M."/>
            <person name="Hamilton J.P."/>
            <person name="Kanamori H."/>
            <person name="McCombie W.R."/>
            <person name="Ouyang S."/>
            <person name="Schwartz D.C."/>
            <person name="Tanaka T."/>
            <person name="Wu J."/>
            <person name="Zhou S."/>
            <person name="Childs K.L."/>
            <person name="Davidson R.M."/>
            <person name="Lin H."/>
            <person name="Quesada-Ocampo L."/>
            <person name="Vaillancourt B."/>
            <person name="Sakai H."/>
            <person name="Lee S.S."/>
            <person name="Kim J."/>
            <person name="Numa H."/>
            <person name="Itoh T."/>
            <person name="Buell C.R."/>
            <person name="Matsumoto T."/>
        </authorList>
    </citation>
    <scope>GENOME REANNOTATION</scope>
    <source>
        <strain>cv. Nipponbare</strain>
    </source>
</reference>
<proteinExistence type="inferred from homology"/>
<protein>
    <recommendedName>
        <fullName>Signal peptidase complex subunit 3</fullName>
    </recommendedName>
    <alternativeName>
        <fullName>Microsomal signal peptidase 22 kDa subunit</fullName>
        <shortName>SPC22</shortName>
        <shortName>SPase 22 kDa subunit</shortName>
    </alternativeName>
</protein>
<gene>
    <name type="ordered locus">Os01g0131800</name>
    <name type="ordered locus">LOC_Os01g04030</name>
    <name type="ORF">P0504H10.30</name>
</gene>
<evidence type="ECO:0000250" key="1">
    <source>
        <dbReference type="UniProtKB" id="P61008"/>
    </source>
</evidence>
<evidence type="ECO:0000250" key="2">
    <source>
        <dbReference type="UniProtKB" id="P61009"/>
    </source>
</evidence>
<evidence type="ECO:0000250" key="3">
    <source>
        <dbReference type="UniProtKB" id="Q12133"/>
    </source>
</evidence>
<evidence type="ECO:0000255" key="4"/>
<evidence type="ECO:0000305" key="5"/>
<sequence>MHSWVQRLLTTATTAALLLLAACCAASALDAFHVPSVQAQAHVTKINRFHKQLNGNDKVFVFLTAEYENSKNSLNQVSLWDHIIPDKDKANLQVEVKSKYPLIDQGSSLRGKKVQLVLHWHVMPKAGVMIRDRMALSEFNLPDSYTS</sequence>
<keyword id="KW-0256">Endoplasmic reticulum</keyword>
<keyword id="KW-0472">Membrane</keyword>
<keyword id="KW-1185">Reference proteome</keyword>
<keyword id="KW-0735">Signal-anchor</keyword>
<keyword id="KW-0812">Transmembrane</keyword>
<keyword id="KW-1133">Transmembrane helix</keyword>